<proteinExistence type="evidence at protein level"/>
<sequence length="317" mass="35995">MAEVESGSNQRQNEEIEAMAAIYGEEWCVIDEVAKIFCIRITDDMDDPKWTLCLQVMLPSEYPGTAPPVYQLNAPWLKGQERAELAKSLEEIYMKNIGESILYQWVEKIRDALIQKSQITEPGPDEKKKTEEEEVEGEDDPILEHPPENPVKTWDLKISESAPEAEELPPIAHGAPITDRRSTFQAHLAPVVCIDQVKKVLAKLYENKKIASATHNIYAYRIYCEDKQTFLQDSEDDGETAAGGRLLHLMEILNVKNVMVVVSRWYGGILLGPDRFKHINNCARNILVEKNFTNSPEESAKSFGKKKVKKDKKKGDH</sequence>
<evidence type="ECO:0000250" key="1">
    <source>
        <dbReference type="UniProtKB" id="O55091"/>
    </source>
</evidence>
<evidence type="ECO:0000255" key="2">
    <source>
        <dbReference type="PROSITE-ProRule" id="PRU00179"/>
    </source>
</evidence>
<evidence type="ECO:0000256" key="3">
    <source>
        <dbReference type="SAM" id="MobiDB-lite"/>
    </source>
</evidence>
<evidence type="ECO:0000305" key="4"/>
<evidence type="ECO:0007744" key="5">
    <source>
    </source>
</evidence>
<name>IMPCT_RAT</name>
<reference key="1">
    <citation type="journal article" date="2005" name="Biochem. Biophys. Res. Commun.">
        <title>Comparative genomics approach toward critical determinants for the imprinting of an evolutionarily conserved gene Impact.</title>
        <authorList>
            <person name="Okamura K."/>
            <person name="Sakaki Y."/>
            <person name="Ito T."/>
        </authorList>
    </citation>
    <scope>NUCLEOTIDE SEQUENCE [MRNA]</scope>
    <source>
        <strain>Wistar</strain>
        <tissue>Brain</tissue>
    </source>
</reference>
<reference key="2">
    <citation type="journal article" date="2012" name="Nat. Commun.">
        <title>Quantitative maps of protein phosphorylation sites across 14 different rat organs and tissues.</title>
        <authorList>
            <person name="Lundby A."/>
            <person name="Secher A."/>
            <person name="Lage K."/>
            <person name="Nordsborg N.B."/>
            <person name="Dmytriyev A."/>
            <person name="Lundby C."/>
            <person name="Olsen J.V."/>
        </authorList>
    </citation>
    <scope>PHOSPHORYLATION [LARGE SCALE ANALYSIS] AT SER-295</scope>
    <scope>IDENTIFICATION BY MASS SPECTROMETRY [LARGE SCALE ANALYSIS]</scope>
</reference>
<accession>Q5GFD9</accession>
<keyword id="KW-0009">Actin-binding</keyword>
<keyword id="KW-0963">Cytoplasm</keyword>
<keyword id="KW-0221">Differentiation</keyword>
<keyword id="KW-0524">Neurogenesis</keyword>
<keyword id="KW-0597">Phosphoprotein</keyword>
<keyword id="KW-1185">Reference proteome</keyword>
<keyword id="KW-0678">Repressor</keyword>
<keyword id="KW-0346">Stress response</keyword>
<keyword id="KW-0810">Translation regulation</keyword>
<comment type="function">
    <text evidence="1">Translational regulator that ensures constant high levels of translation upon a variety of stress conditions, such as amino acid starvation, UV-C irradiation, proteasome inhibitor treatment and glucose deprivation. Plays a role as a negative regulator of the EIF2AK4/GCN2 kinase activity; impairs GCN1-mediated EIF2AK4/GCN2 activation, and hence EIF2AK4/GCN2-mediated eIF-2-alpha phosphorylation and subsequent down-regulation of protein synthesis. May be required to regulate translation in specific neuronal cells under amino acid starvation conditions by preventing GCN2 activation and therefore ATF4 synthesis. Through its inhibitory action on EIF2AK4/GCN2, plays a role in differentiation of neuronal cells by stimulating neurite outgrowth.</text>
</comment>
<comment type="subunit">
    <text evidence="1">Interacts with GCN1; prevents the interaction of GCN1 with EIF2AK4/GCN2 and inhibits EIF2AK4/GCN2 kinase activity. Interaction with RPL39; this interaction occurs in a GCN1-independent manner. Associates with ribosomes; this interaction occurs in a GCN1-independent manner. Associates with actin; this interaction occurs in a GCN1-independent manner.</text>
</comment>
<comment type="subcellular location">
    <subcellularLocation>
        <location evidence="1">Cytoplasm</location>
    </subcellularLocation>
</comment>
<comment type="similarity">
    <text evidence="4">Belongs to the IMPACT family.</text>
</comment>
<gene>
    <name type="primary">Impact</name>
</gene>
<dbReference type="EMBL" id="AY574213">
    <property type="protein sequence ID" value="AAS80055.1"/>
    <property type="molecule type" value="mRNA"/>
</dbReference>
<dbReference type="RefSeq" id="NP_001012235.1">
    <property type="nucleotide sequence ID" value="NM_001012235.1"/>
</dbReference>
<dbReference type="RefSeq" id="XP_038952946.1">
    <property type="nucleotide sequence ID" value="XM_039097018.2"/>
</dbReference>
<dbReference type="RefSeq" id="XP_063133579.1">
    <property type="nucleotide sequence ID" value="XM_063277509.1"/>
</dbReference>
<dbReference type="RefSeq" id="XP_063133580.1">
    <property type="nucleotide sequence ID" value="XM_063277510.1"/>
</dbReference>
<dbReference type="RefSeq" id="XP_063133581.1">
    <property type="nucleotide sequence ID" value="XM_063277511.1"/>
</dbReference>
<dbReference type="RefSeq" id="XP_063133582.1">
    <property type="nucleotide sequence ID" value="XM_063277512.1"/>
</dbReference>
<dbReference type="SMR" id="Q5GFD9"/>
<dbReference type="BioGRID" id="268970">
    <property type="interactions" value="3"/>
</dbReference>
<dbReference type="FunCoup" id="Q5GFD9">
    <property type="interactions" value="3109"/>
</dbReference>
<dbReference type="IntAct" id="Q5GFD9">
    <property type="interactions" value="1"/>
</dbReference>
<dbReference type="MINT" id="Q5GFD9"/>
<dbReference type="STRING" id="10116.ENSRNOP00000064200"/>
<dbReference type="iPTMnet" id="Q5GFD9"/>
<dbReference type="PhosphoSitePlus" id="Q5GFD9"/>
<dbReference type="SwissPalm" id="Q5GFD9"/>
<dbReference type="jPOST" id="Q5GFD9"/>
<dbReference type="PaxDb" id="10116-ENSRNOP00000064200"/>
<dbReference type="Ensembl" id="ENSRNOT00000116602.1">
    <property type="protein sequence ID" value="ENSRNOP00000078372.1"/>
    <property type="gene ID" value="ENSRNOG00000045844.3"/>
</dbReference>
<dbReference type="GeneID" id="497198"/>
<dbReference type="KEGG" id="rno:497198"/>
<dbReference type="AGR" id="RGD:1591977"/>
<dbReference type="CTD" id="55364"/>
<dbReference type="RGD" id="1591977">
    <property type="gene designation" value="Impact"/>
</dbReference>
<dbReference type="eggNOG" id="KOG3299">
    <property type="taxonomic scope" value="Eukaryota"/>
</dbReference>
<dbReference type="GeneTree" id="ENSGT00390000017571"/>
<dbReference type="HOGENOM" id="CLU_045276_1_0_1"/>
<dbReference type="InParanoid" id="Q5GFD9"/>
<dbReference type="OMA" id="FYEISAP"/>
<dbReference type="OrthoDB" id="69641at2759"/>
<dbReference type="PhylomeDB" id="Q5GFD9"/>
<dbReference type="PRO" id="PR:Q5GFD9"/>
<dbReference type="Proteomes" id="UP000002494">
    <property type="component" value="Chromosome 18"/>
</dbReference>
<dbReference type="Bgee" id="ENSRNOG00000045844">
    <property type="expression patterns" value="Expressed in cerebellum and 20 other cell types or tissues"/>
</dbReference>
<dbReference type="GO" id="GO:0005737">
    <property type="term" value="C:cytoplasm"/>
    <property type="evidence" value="ECO:0000250"/>
    <property type="project" value="UniProtKB"/>
</dbReference>
<dbReference type="GO" id="GO:0003779">
    <property type="term" value="F:actin binding"/>
    <property type="evidence" value="ECO:0000266"/>
    <property type="project" value="RGD"/>
</dbReference>
<dbReference type="GO" id="GO:0140311">
    <property type="term" value="F:protein sequestering activity"/>
    <property type="evidence" value="ECO:0000250"/>
    <property type="project" value="UniProtKB"/>
</dbReference>
<dbReference type="GO" id="GO:0043022">
    <property type="term" value="F:ribosome binding"/>
    <property type="evidence" value="ECO:0000266"/>
    <property type="project" value="RGD"/>
</dbReference>
<dbReference type="GO" id="GO:0034198">
    <property type="term" value="P:cellular response to amino acid starvation"/>
    <property type="evidence" value="ECO:0000250"/>
    <property type="project" value="UniProtKB"/>
</dbReference>
<dbReference type="GO" id="GO:0140469">
    <property type="term" value="P:GCN2-mediated signaling"/>
    <property type="evidence" value="ECO:0000250"/>
    <property type="project" value="UniProtKB"/>
</dbReference>
<dbReference type="GO" id="GO:0035556">
    <property type="term" value="P:intracellular signal transduction"/>
    <property type="evidence" value="ECO:0000250"/>
    <property type="project" value="UniProtKB"/>
</dbReference>
<dbReference type="GO" id="GO:0000122">
    <property type="term" value="P:negative regulation of transcription by RNA polymerase II"/>
    <property type="evidence" value="ECO:0000250"/>
    <property type="project" value="UniProtKB"/>
</dbReference>
<dbReference type="GO" id="GO:1990138">
    <property type="term" value="P:neuron projection extension"/>
    <property type="evidence" value="ECO:0000250"/>
    <property type="project" value="UniProtKB"/>
</dbReference>
<dbReference type="GO" id="GO:0045666">
    <property type="term" value="P:positive regulation of neuron differentiation"/>
    <property type="evidence" value="ECO:0000250"/>
    <property type="project" value="UniProtKB"/>
</dbReference>
<dbReference type="GO" id="GO:1990611">
    <property type="term" value="P:regulation of cytoplasmic translational initiation in response to stress"/>
    <property type="evidence" value="ECO:0000250"/>
    <property type="project" value="UniProtKB"/>
</dbReference>
<dbReference type="GO" id="GO:0006446">
    <property type="term" value="P:regulation of translational initiation"/>
    <property type="evidence" value="ECO:0000266"/>
    <property type="project" value="RGD"/>
</dbReference>
<dbReference type="CDD" id="cd23821">
    <property type="entry name" value="RWD_IMPACT"/>
    <property type="match status" value="1"/>
</dbReference>
<dbReference type="FunFam" id="3.10.110.10:FF:000066">
    <property type="entry name" value="IMPACT isoform 1"/>
    <property type="match status" value="1"/>
</dbReference>
<dbReference type="FunFam" id="3.30.230.30:FF:000001">
    <property type="entry name" value="IMPACT isoform 1"/>
    <property type="match status" value="1"/>
</dbReference>
<dbReference type="Gene3D" id="3.30.230.30">
    <property type="entry name" value="Impact, N-terminal domain"/>
    <property type="match status" value="1"/>
</dbReference>
<dbReference type="Gene3D" id="3.10.110.10">
    <property type="entry name" value="Ubiquitin Conjugating Enzyme"/>
    <property type="match status" value="1"/>
</dbReference>
<dbReference type="InterPro" id="IPR023582">
    <property type="entry name" value="Impact"/>
</dbReference>
<dbReference type="InterPro" id="IPR001498">
    <property type="entry name" value="Impact_N"/>
</dbReference>
<dbReference type="InterPro" id="IPR036956">
    <property type="entry name" value="Impact_N_sf"/>
</dbReference>
<dbReference type="InterPro" id="IPR020568">
    <property type="entry name" value="Ribosomal_Su5_D2-typ_SF"/>
</dbReference>
<dbReference type="InterPro" id="IPR006575">
    <property type="entry name" value="RWD_dom"/>
</dbReference>
<dbReference type="InterPro" id="IPR016135">
    <property type="entry name" value="UBQ-conjugating_enzyme/RWD"/>
</dbReference>
<dbReference type="InterPro" id="IPR020569">
    <property type="entry name" value="UPF0029_Impact_CS"/>
</dbReference>
<dbReference type="PANTHER" id="PTHR16301">
    <property type="entry name" value="IMPACT-RELATED"/>
    <property type="match status" value="1"/>
</dbReference>
<dbReference type="PANTHER" id="PTHR16301:SF25">
    <property type="entry name" value="PROTEIN IMPACT"/>
    <property type="match status" value="1"/>
</dbReference>
<dbReference type="Pfam" id="PF05773">
    <property type="entry name" value="RWD"/>
    <property type="match status" value="1"/>
</dbReference>
<dbReference type="Pfam" id="PF01205">
    <property type="entry name" value="UPF0029"/>
    <property type="match status" value="1"/>
</dbReference>
<dbReference type="SMART" id="SM00591">
    <property type="entry name" value="RWD"/>
    <property type="match status" value="1"/>
</dbReference>
<dbReference type="SUPFAM" id="SSF54211">
    <property type="entry name" value="Ribosomal protein S5 domain 2-like"/>
    <property type="match status" value="1"/>
</dbReference>
<dbReference type="SUPFAM" id="SSF54495">
    <property type="entry name" value="UBC-like"/>
    <property type="match status" value="1"/>
</dbReference>
<dbReference type="PROSITE" id="PS50908">
    <property type="entry name" value="RWD"/>
    <property type="match status" value="1"/>
</dbReference>
<dbReference type="PROSITE" id="PS00910">
    <property type="entry name" value="UPF0029"/>
    <property type="match status" value="1"/>
</dbReference>
<organism>
    <name type="scientific">Rattus norvegicus</name>
    <name type="common">Rat</name>
    <dbReference type="NCBI Taxonomy" id="10116"/>
    <lineage>
        <taxon>Eukaryota</taxon>
        <taxon>Metazoa</taxon>
        <taxon>Chordata</taxon>
        <taxon>Craniata</taxon>
        <taxon>Vertebrata</taxon>
        <taxon>Euteleostomi</taxon>
        <taxon>Mammalia</taxon>
        <taxon>Eutheria</taxon>
        <taxon>Euarchontoglires</taxon>
        <taxon>Glires</taxon>
        <taxon>Rodentia</taxon>
        <taxon>Myomorpha</taxon>
        <taxon>Muroidea</taxon>
        <taxon>Muridae</taxon>
        <taxon>Murinae</taxon>
        <taxon>Rattus</taxon>
    </lineage>
</organism>
<protein>
    <recommendedName>
        <fullName>Protein IMPACT</fullName>
    </recommendedName>
    <alternativeName>
        <fullName>Imprinted and ancient gene protein homolog</fullName>
    </alternativeName>
</protein>
<feature type="chain" id="PRO_0000330853" description="Protein IMPACT">
    <location>
        <begin position="1"/>
        <end position="317"/>
    </location>
</feature>
<feature type="domain" description="RWD" evidence="2">
    <location>
        <begin position="14"/>
        <end position="116"/>
    </location>
</feature>
<feature type="region of interest" description="Disordered" evidence="3">
    <location>
        <begin position="117"/>
        <end position="151"/>
    </location>
</feature>
<feature type="region of interest" description="Disordered" evidence="3">
    <location>
        <begin position="295"/>
        <end position="317"/>
    </location>
</feature>
<feature type="compositionally biased region" description="Acidic residues" evidence="3">
    <location>
        <begin position="132"/>
        <end position="141"/>
    </location>
</feature>
<feature type="compositionally biased region" description="Basic residues" evidence="3">
    <location>
        <begin position="303"/>
        <end position="317"/>
    </location>
</feature>
<feature type="modified residue" description="Phosphoserine" evidence="5">
    <location>
        <position position="295"/>
    </location>
</feature>